<organism>
    <name type="scientific">Staphylococcus aureus (strain MSSA476)</name>
    <dbReference type="NCBI Taxonomy" id="282459"/>
    <lineage>
        <taxon>Bacteria</taxon>
        <taxon>Bacillati</taxon>
        <taxon>Bacillota</taxon>
        <taxon>Bacilli</taxon>
        <taxon>Bacillales</taxon>
        <taxon>Staphylococcaceae</taxon>
        <taxon>Staphylococcus</taxon>
    </lineage>
</organism>
<dbReference type="EMBL" id="BX571857">
    <property type="protein sequence ID" value="CAG42279.1"/>
    <property type="molecule type" value="Genomic_DNA"/>
</dbReference>
<dbReference type="RefSeq" id="WP_001137495.1">
    <property type="nucleotide sequence ID" value="NC_002953.3"/>
</dbReference>
<dbReference type="SMR" id="Q6GBU1"/>
<dbReference type="GeneID" id="98344880"/>
<dbReference type="KEGG" id="sas:SAS0504"/>
<dbReference type="HOGENOM" id="CLU_072226_1_1_9"/>
<dbReference type="GO" id="GO:0015935">
    <property type="term" value="C:small ribosomal subunit"/>
    <property type="evidence" value="ECO:0007669"/>
    <property type="project" value="InterPro"/>
</dbReference>
<dbReference type="GO" id="GO:0019843">
    <property type="term" value="F:rRNA binding"/>
    <property type="evidence" value="ECO:0007669"/>
    <property type="project" value="UniProtKB-UniRule"/>
</dbReference>
<dbReference type="GO" id="GO:0003735">
    <property type="term" value="F:structural constituent of ribosome"/>
    <property type="evidence" value="ECO:0007669"/>
    <property type="project" value="InterPro"/>
</dbReference>
<dbReference type="GO" id="GO:0000049">
    <property type="term" value="F:tRNA binding"/>
    <property type="evidence" value="ECO:0007669"/>
    <property type="project" value="UniProtKB-UniRule"/>
</dbReference>
<dbReference type="GO" id="GO:0006412">
    <property type="term" value="P:translation"/>
    <property type="evidence" value="ECO:0007669"/>
    <property type="project" value="UniProtKB-UniRule"/>
</dbReference>
<dbReference type="CDD" id="cd14869">
    <property type="entry name" value="uS7_Bacteria"/>
    <property type="match status" value="1"/>
</dbReference>
<dbReference type="FunFam" id="1.10.455.10:FF:000001">
    <property type="entry name" value="30S ribosomal protein S7"/>
    <property type="match status" value="1"/>
</dbReference>
<dbReference type="Gene3D" id="1.10.455.10">
    <property type="entry name" value="Ribosomal protein S7 domain"/>
    <property type="match status" value="1"/>
</dbReference>
<dbReference type="HAMAP" id="MF_00480_B">
    <property type="entry name" value="Ribosomal_uS7_B"/>
    <property type="match status" value="1"/>
</dbReference>
<dbReference type="InterPro" id="IPR000235">
    <property type="entry name" value="Ribosomal_uS7"/>
</dbReference>
<dbReference type="InterPro" id="IPR005717">
    <property type="entry name" value="Ribosomal_uS7_bac/org-type"/>
</dbReference>
<dbReference type="InterPro" id="IPR020606">
    <property type="entry name" value="Ribosomal_uS7_CS"/>
</dbReference>
<dbReference type="InterPro" id="IPR023798">
    <property type="entry name" value="Ribosomal_uS7_dom"/>
</dbReference>
<dbReference type="InterPro" id="IPR036823">
    <property type="entry name" value="Ribosomal_uS7_dom_sf"/>
</dbReference>
<dbReference type="NCBIfam" id="TIGR01029">
    <property type="entry name" value="rpsG_bact"/>
    <property type="match status" value="1"/>
</dbReference>
<dbReference type="PANTHER" id="PTHR11205">
    <property type="entry name" value="RIBOSOMAL PROTEIN S7"/>
    <property type="match status" value="1"/>
</dbReference>
<dbReference type="Pfam" id="PF00177">
    <property type="entry name" value="Ribosomal_S7"/>
    <property type="match status" value="1"/>
</dbReference>
<dbReference type="PIRSF" id="PIRSF002122">
    <property type="entry name" value="RPS7p_RPS7a_RPS5e_RPS7o"/>
    <property type="match status" value="1"/>
</dbReference>
<dbReference type="SUPFAM" id="SSF47973">
    <property type="entry name" value="Ribosomal protein S7"/>
    <property type="match status" value="1"/>
</dbReference>
<dbReference type="PROSITE" id="PS00052">
    <property type="entry name" value="RIBOSOMAL_S7"/>
    <property type="match status" value="1"/>
</dbReference>
<protein>
    <recommendedName>
        <fullName evidence="1">Small ribosomal subunit protein uS7</fullName>
    </recommendedName>
    <alternativeName>
        <fullName evidence="2">30S ribosomal protein S7</fullName>
    </alternativeName>
</protein>
<sequence>MPRKGSVPKRDVLPDPIHNSKLVTKLINKIMLDGKRGTAQRILYSAFDLVEQRSGRDALEVFEEAINNIMPVLEVKARRVGGSNYQVPVEVRPERRTTLGLRWLVNYARLRGEKTMEDRLANEILDAANNTGGAVKKREDTHKMAEANKAFAHYRW</sequence>
<feature type="chain" id="PRO_0000124345" description="Small ribosomal subunit protein uS7">
    <location>
        <begin position="1"/>
        <end position="156"/>
    </location>
</feature>
<accession>Q6GBU1</accession>
<name>RS7_STAAS</name>
<reference key="1">
    <citation type="journal article" date="2004" name="Proc. Natl. Acad. Sci. U.S.A.">
        <title>Complete genomes of two clinical Staphylococcus aureus strains: evidence for the rapid evolution of virulence and drug resistance.</title>
        <authorList>
            <person name="Holden M.T.G."/>
            <person name="Feil E.J."/>
            <person name="Lindsay J.A."/>
            <person name="Peacock S.J."/>
            <person name="Day N.P.J."/>
            <person name="Enright M.C."/>
            <person name="Foster T.J."/>
            <person name="Moore C.E."/>
            <person name="Hurst L."/>
            <person name="Atkin R."/>
            <person name="Barron A."/>
            <person name="Bason N."/>
            <person name="Bentley S.D."/>
            <person name="Chillingworth C."/>
            <person name="Chillingworth T."/>
            <person name="Churcher C."/>
            <person name="Clark L."/>
            <person name="Corton C."/>
            <person name="Cronin A."/>
            <person name="Doggett J."/>
            <person name="Dowd L."/>
            <person name="Feltwell T."/>
            <person name="Hance Z."/>
            <person name="Harris B."/>
            <person name="Hauser H."/>
            <person name="Holroyd S."/>
            <person name="Jagels K."/>
            <person name="James K.D."/>
            <person name="Lennard N."/>
            <person name="Line A."/>
            <person name="Mayes R."/>
            <person name="Moule S."/>
            <person name="Mungall K."/>
            <person name="Ormond D."/>
            <person name="Quail M.A."/>
            <person name="Rabbinowitsch E."/>
            <person name="Rutherford K.M."/>
            <person name="Sanders M."/>
            <person name="Sharp S."/>
            <person name="Simmonds M."/>
            <person name="Stevens K."/>
            <person name="Whitehead S."/>
            <person name="Barrell B.G."/>
            <person name="Spratt B.G."/>
            <person name="Parkhill J."/>
        </authorList>
    </citation>
    <scope>NUCLEOTIDE SEQUENCE [LARGE SCALE GENOMIC DNA]</scope>
    <source>
        <strain>MSSA476</strain>
    </source>
</reference>
<comment type="function">
    <text evidence="1">One of the primary rRNA binding proteins, it binds directly to 16S rRNA where it nucleates assembly of the head domain of the 30S subunit. Is located at the subunit interface close to the decoding center, probably blocks exit of the E-site tRNA.</text>
</comment>
<comment type="subunit">
    <text evidence="1">Part of the 30S ribosomal subunit. Contacts proteins S9 and S11.</text>
</comment>
<comment type="similarity">
    <text evidence="1">Belongs to the universal ribosomal protein uS7 family.</text>
</comment>
<gene>
    <name evidence="1" type="primary">rpsG</name>
    <name type="ordered locus">SAS0504</name>
</gene>
<keyword id="KW-0687">Ribonucleoprotein</keyword>
<keyword id="KW-0689">Ribosomal protein</keyword>
<keyword id="KW-0694">RNA-binding</keyword>
<keyword id="KW-0699">rRNA-binding</keyword>
<keyword id="KW-0820">tRNA-binding</keyword>
<evidence type="ECO:0000255" key="1">
    <source>
        <dbReference type="HAMAP-Rule" id="MF_00480"/>
    </source>
</evidence>
<evidence type="ECO:0000305" key="2"/>
<proteinExistence type="inferred from homology"/>